<proteinExistence type="evidence at protein level"/>
<name>GLOJ_GLAL2</name>
<evidence type="ECO:0000250" key="1">
    <source>
        <dbReference type="UniProtKB" id="O67078"/>
    </source>
</evidence>
<evidence type="ECO:0000269" key="2">
    <source>
    </source>
</evidence>
<evidence type="ECO:0000269" key="3">
    <source>
    </source>
</evidence>
<evidence type="ECO:0000269" key="4">
    <source>
    </source>
</evidence>
<evidence type="ECO:0000269" key="5">
    <source>
    </source>
</evidence>
<evidence type="ECO:0000269" key="6">
    <source>
    </source>
</evidence>
<evidence type="ECO:0000303" key="7">
    <source>
    </source>
</evidence>
<evidence type="ECO:0000303" key="8">
    <source>
    </source>
</evidence>
<evidence type="ECO:0000303" key="9">
    <source>
    </source>
</evidence>
<evidence type="ECO:0000303" key="10">
    <source>
    </source>
</evidence>
<evidence type="ECO:0000305" key="11"/>
<evidence type="ECO:0000305" key="12">
    <source>
    </source>
</evidence>
<gene>
    <name evidence="8" type="primary">gloJ</name>
    <name evidence="9" type="synonym">GLHtyD</name>
    <name type="ORF">GLAREA_10037</name>
</gene>
<feature type="chain" id="PRO_0000444493" description="3-isopropylmalate dehydratase large subunit gloJ">
    <location>
        <begin position="1"/>
        <end position="880"/>
    </location>
</feature>
<feature type="binding site" evidence="1">
    <location>
        <position position="457"/>
    </location>
    <ligand>
        <name>[4Fe-4S] cluster</name>
        <dbReference type="ChEBI" id="CHEBI:49883"/>
    </ligand>
</feature>
<feature type="binding site" evidence="1">
    <location>
        <position position="520"/>
    </location>
    <ligand>
        <name>[4Fe-4S] cluster</name>
        <dbReference type="ChEBI" id="CHEBI:49883"/>
    </ligand>
</feature>
<feature type="binding site" evidence="1">
    <location>
        <position position="523"/>
    </location>
    <ligand>
        <name>[4Fe-4S] cluster</name>
        <dbReference type="ChEBI" id="CHEBI:49883"/>
    </ligand>
</feature>
<dbReference type="EC" id="4.2.1.33" evidence="1"/>
<dbReference type="EMBL" id="KE145356">
    <property type="protein sequence ID" value="EPE34343.1"/>
    <property type="molecule type" value="Genomic_DNA"/>
</dbReference>
<dbReference type="RefSeq" id="XP_008078278.1">
    <property type="nucleotide sequence ID" value="XM_008080087.1"/>
</dbReference>
<dbReference type="SMR" id="S3E7P8"/>
<dbReference type="STRING" id="1116229.S3E7P8"/>
<dbReference type="GeneID" id="19469084"/>
<dbReference type="KEGG" id="glz:GLAREA_10037"/>
<dbReference type="eggNOG" id="KOG0454">
    <property type="taxonomic scope" value="Eukaryota"/>
</dbReference>
<dbReference type="HOGENOM" id="CLU_006714_3_3_1"/>
<dbReference type="OMA" id="EPAWYIR"/>
<dbReference type="OrthoDB" id="419183at2759"/>
<dbReference type="Proteomes" id="UP000016922">
    <property type="component" value="Unassembled WGS sequence"/>
</dbReference>
<dbReference type="GO" id="GO:0003861">
    <property type="term" value="F:3-isopropylmalate dehydratase activity"/>
    <property type="evidence" value="ECO:0007669"/>
    <property type="project" value="UniProtKB-EC"/>
</dbReference>
<dbReference type="GO" id="GO:0051539">
    <property type="term" value="F:4 iron, 4 sulfur cluster binding"/>
    <property type="evidence" value="ECO:0007669"/>
    <property type="project" value="UniProtKB-KW"/>
</dbReference>
<dbReference type="GO" id="GO:0046872">
    <property type="term" value="F:metal ion binding"/>
    <property type="evidence" value="ECO:0007669"/>
    <property type="project" value="UniProtKB-KW"/>
</dbReference>
<dbReference type="GO" id="GO:0009098">
    <property type="term" value="P:L-leucine biosynthetic process"/>
    <property type="evidence" value="ECO:0007669"/>
    <property type="project" value="UniProtKB-KW"/>
</dbReference>
<dbReference type="Gene3D" id="3.30.499.10">
    <property type="entry name" value="Aconitase, domain 3"/>
    <property type="match status" value="2"/>
</dbReference>
<dbReference type="Gene3D" id="3.20.19.10">
    <property type="entry name" value="Aconitase, domain 4"/>
    <property type="match status" value="1"/>
</dbReference>
<dbReference type="InterPro" id="IPR015931">
    <property type="entry name" value="Acnase/IPM_dHydase_lsu_aba_1/3"/>
</dbReference>
<dbReference type="InterPro" id="IPR001030">
    <property type="entry name" value="Acoase/IPM_deHydtase_lsu_aba"/>
</dbReference>
<dbReference type="InterPro" id="IPR015928">
    <property type="entry name" value="Aconitase/3IPM_dehydase_swvl"/>
</dbReference>
<dbReference type="InterPro" id="IPR018136">
    <property type="entry name" value="Aconitase_4Fe-4S_BS"/>
</dbReference>
<dbReference type="InterPro" id="IPR036008">
    <property type="entry name" value="Aconitase_4Fe-4S_dom"/>
</dbReference>
<dbReference type="InterPro" id="IPR000573">
    <property type="entry name" value="AconitaseA/IPMdHydase_ssu_swvl"/>
</dbReference>
<dbReference type="InterPro" id="IPR050067">
    <property type="entry name" value="IPM_dehydratase_rel_enz"/>
</dbReference>
<dbReference type="PANTHER" id="PTHR43822:SF2">
    <property type="entry name" value="HOMOACONITASE, MITOCHONDRIAL"/>
    <property type="match status" value="1"/>
</dbReference>
<dbReference type="PANTHER" id="PTHR43822">
    <property type="entry name" value="HOMOACONITASE, MITOCHONDRIAL-RELATED"/>
    <property type="match status" value="1"/>
</dbReference>
<dbReference type="Pfam" id="PF00330">
    <property type="entry name" value="Aconitase"/>
    <property type="match status" value="2"/>
</dbReference>
<dbReference type="Pfam" id="PF00694">
    <property type="entry name" value="Aconitase_C"/>
    <property type="match status" value="1"/>
</dbReference>
<dbReference type="PRINTS" id="PR00415">
    <property type="entry name" value="ACONITASE"/>
</dbReference>
<dbReference type="SUPFAM" id="SSF53732">
    <property type="entry name" value="Aconitase iron-sulfur domain"/>
    <property type="match status" value="1"/>
</dbReference>
<dbReference type="SUPFAM" id="SSF52016">
    <property type="entry name" value="LeuD/IlvD-like"/>
    <property type="match status" value="1"/>
</dbReference>
<dbReference type="PROSITE" id="PS01244">
    <property type="entry name" value="ACONITASE_2"/>
    <property type="match status" value="1"/>
</dbReference>
<comment type="function">
    <text evidence="2 3 4 5 6 10">3-isopropylmalate dehydratase large subunit; part of the gene cluster that mediates the biosynthesis of pneumocandins, lipohexapeptides of the echinocandin family that prevent fungal cell wall formation by non-competitive inhibition of beta-1,3-glucan synthase (PubMed:27705900). The 10,12-dimethylmyristoyl side chain is synthesized by the reducing polyketide synthase gloL/GLPKS4 (PubMed:27494047). The thioesterase gloN/GLHYD exclusively interacts with gloL/GLPKS4 to maintain turnover of the polyketide side chain (PubMed:27494047). The 10R,12S-dimethylmyristic acid is then transferred to the first thiolation domain of the nonribosomal peptide synthetase gloA/GLNRPS4 by the acyl-AMP ligase gloD/GLligase, followed by its acylation to L-ornithine to trigger elongation of the cyclic hexapeptide (PubMed:27494047). L-ornithine, 4R-hydroxyl-L-proline (generated from L-proline by the dioxygenase gloF/GLOXY2), 3S-hydroxyl-L-homotyrosine (generated by gloG/GLHtyB, gloH/GLHtyA, gloI/GLHtyC, gloJ/GLHtyD and hydroxylated at C-3 by the dioxygenase gloM/GLOXY1), 3R-hydroxyl-L-glutamine (generated from L-glutamine probably by the dioxygenase gloE/GLOXY3) and 3S-hydroxyl-L-proline (generated from L-proline by the dioxygenase gloF/GLOXY2 to yield pneumocandin B0), or 3S-hydroxyl-4S-methyl-L-proline (generated from L-leucine by the dioxygenase gloC/GLOXY4 to yield pneumocandin A0) are sequentially added to the growing chain (PubMed:25270390, PubMed:25527531, PubMed:25879325). The last C domain of gloA/GLNRPS4 is proposed to be responsible for cyclization by condensation to form the peptide bond between L-ornithine and 3S-hydroxyl-4S-methyl-L-proline (for pneumocandin A0) or 3S-hydroxyl-L-proline (for pneumocandin B0). Finally, the subsequent C-4 hydroxylation of 3S-hydroxyl-L-homotyrosine and L-ornithine dihydroxylation at C-4 and C-5 are performed by the cytochrome P450 monooxygenases gloP/GLP450-1 and gloO/GLP450-2, respectively (PubMed:25879325).</text>
</comment>
<comment type="catalytic activity">
    <reaction evidence="1">
        <text>(2R,3S)-3-isopropylmalate = (2S)-2-isopropylmalate</text>
        <dbReference type="Rhea" id="RHEA:32287"/>
        <dbReference type="ChEBI" id="CHEBI:1178"/>
        <dbReference type="ChEBI" id="CHEBI:35121"/>
        <dbReference type="EC" id="4.2.1.33"/>
    </reaction>
</comment>
<comment type="cofactor">
    <cofactor evidence="1">
        <name>[4Fe-4S] cluster</name>
        <dbReference type="ChEBI" id="CHEBI:49883"/>
    </cofactor>
    <text evidence="1">Binds 1 [4Fe-4S] cluster per subunit.</text>
</comment>
<comment type="pathway">
    <text evidence="12">Mycotoxin biosynthesis.</text>
</comment>
<comment type="biotechnology">
    <text evidence="3 4 5">Pneumocandin B0 is the starting molecule for the first semisynthetic echinocandin antifungal drug, caspofungin acetate (PubMed:25527531). Pneumocandin B0 is a minor fermentation product, and its industrial production was achieved by a combination of extensive mutation and medium optimization (PubMed:25527531). Inactivation of three of gloP/GLP450-1, gloO/GLP450-2, and gloM/GLOXY1 generates 13 different pneumocandin analogs that lack one, two, three, or four hydroxyl groups on 4R,5R-dihydroxy-ornithine and 3S,4S-dihydroxy-homotyrosine of the parent hexapeptide (PubMed:25879325). All of these cyclic lipopeptides show potent antifungal activities, and two new metabolites pneumocandins F and G are more potent in vitro against Candida species and Aspergillus fumigatus than the principal fermentation products, pneumocandins A0 and B0 (PubMed:25879325). Moreover, feeding alternative side chain precursors yields acrophiarin and 4 additional pneumocandin congeners with straight C14, C15, and C16 side chains. One of those compounds, pneumocandin I, has elevated antifungal activity and similar hemolytic activity compared to pneumocandin B0, the starting molecule for caspofungin, demonstrating the potential for using gloD/GLligase for future engineering of new echinocandin analogs (PubMed:27494047).</text>
</comment>
<comment type="similarity">
    <text evidence="11">Belongs to the aconitase/IPM isomerase family. LeuC type 2 subfamily.</text>
</comment>
<reference key="1">
    <citation type="journal article" date="2013" name="BMC Genomics">
        <title>Genomics-driven discovery of the pneumocandin biosynthetic gene cluster in the fungus Glarea lozoyensis.</title>
        <authorList>
            <person name="Chen L."/>
            <person name="Yue Q."/>
            <person name="Zhang X."/>
            <person name="Xiang M."/>
            <person name="Wang C."/>
            <person name="Li S."/>
            <person name="Che Y."/>
            <person name="Ortiz-Lopez F.J."/>
            <person name="Bills G.F."/>
            <person name="Liu X."/>
            <person name="An Z."/>
        </authorList>
    </citation>
    <scope>NUCLEOTIDE SEQUENCE [LARGE SCALE GENOMIC DNA]</scope>
    <scope>IDENTIFICATION</scope>
    <scope>FUNCTION</scope>
    <source>
        <strain>ATCC 20868 / MF5171</strain>
    </source>
</reference>
<reference key="2">
    <citation type="journal article" date="2014" name="ChemBioChem">
        <title>Pneumocandin biosynthesis: involvement of a trans-selective proline hydroxylase.</title>
        <authorList>
            <person name="Houwaart S."/>
            <person name="Youssar L."/>
            <person name="Huettel W."/>
        </authorList>
    </citation>
    <scope>FUNCTION</scope>
</reference>
<reference key="3">
    <citation type="journal article" date="2015" name="ACS Chem. Biol.">
        <title>Genetic manipulation of the pneumocandin biosynthetic pathway for generation of analogues and evaluation of their antifungal activity.</title>
        <authorList>
            <person name="Li Y."/>
            <person name="Chen L."/>
            <person name="Yue Q."/>
            <person name="Liu X."/>
            <person name="An Z."/>
            <person name="Bills G.F."/>
        </authorList>
    </citation>
    <scope>FUNCTION</scope>
    <scope>PATHWAY</scope>
    <scope>BIOTECHNOLOGY</scope>
</reference>
<reference key="4">
    <citation type="journal article" date="2015" name="Appl. Environ. Microbiol.">
        <title>Engineering of Glarea lozoyensis for exclusive production of the pneumocandin B0 precursor of the antifungal drug caspofungin acetate.</title>
        <authorList>
            <person name="Chen L."/>
            <person name="Yue Q."/>
            <person name="Li Y."/>
            <person name="Niu X."/>
            <person name="Xiang M."/>
            <person name="Wang W."/>
            <person name="Bills G.F."/>
            <person name="Liu X."/>
            <person name="An Z."/>
        </authorList>
    </citation>
    <scope>FUNCTION</scope>
    <scope>BIOTECHNOLOGY</scope>
</reference>
<reference key="5">
    <citation type="journal article" date="2016" name="ACS Chem. Biol.">
        <title>Engineering of new pneumocandin side-chain analogues from Glarea lozoyensis by mutasynthesis and evaluation of their antifungal activity.</title>
        <authorList>
            <person name="Chen L."/>
            <person name="Li Y."/>
            <person name="Yue Q."/>
            <person name="Loksztejn A."/>
            <person name="Yokoyama K."/>
            <person name="Felix E.A."/>
            <person name="Liu X."/>
            <person name="Zhang N."/>
            <person name="An Z."/>
            <person name="Bills G.F."/>
        </authorList>
    </citation>
    <scope>FUNCTION</scope>
    <scope>BIOTECHNOLOGY</scope>
</reference>
<reference key="6">
    <citation type="journal article" date="2018" name="Appl. Environ. Microbiol.">
        <title>Cryptic production of trans-3-hydroxyproline in echinocandin B biosynthesis.</title>
        <authorList>
            <person name="Mattay J."/>
            <person name="Houwaart S."/>
            <person name="Huettel W."/>
        </authorList>
    </citation>
    <scope>FUNCTION</scope>
</reference>
<reference key="7">
    <citation type="journal article" date="2017" name="Z. Naturforsch. C">
        <title>Structural diversity in echinocandin biosynthesis: the impact of oxidation steps and approaches toward an evolutionary explanation.</title>
        <authorList>
            <person name="Huettel W."/>
        </authorList>
    </citation>
    <scope>REVIEW</scope>
</reference>
<organism>
    <name type="scientific">Glarea lozoyensis (strain ATCC 20868 / MF5171)</name>
    <dbReference type="NCBI Taxonomy" id="1116229"/>
    <lineage>
        <taxon>Eukaryota</taxon>
        <taxon>Fungi</taxon>
        <taxon>Dikarya</taxon>
        <taxon>Ascomycota</taxon>
        <taxon>Pezizomycotina</taxon>
        <taxon>Leotiomycetes</taxon>
        <taxon>Helotiales</taxon>
        <taxon>Helotiaceae</taxon>
        <taxon>Glarea</taxon>
    </lineage>
</organism>
<protein>
    <recommendedName>
        <fullName evidence="1">3-isopropylmalate dehydratase large subunit gloJ</fullName>
        <ecNumber evidence="1">4.2.1.33</ecNumber>
    </recommendedName>
    <alternativeName>
        <fullName evidence="7">L-homotyrosine biosynthesis sub-cluster protein gloJ</fullName>
    </alternativeName>
    <alternativeName>
        <fullName evidence="8">Pneumocandin biosynthesis cluster protein J</fullName>
    </alternativeName>
</protein>
<keyword id="KW-0004">4Fe-4S</keyword>
<keyword id="KW-0028">Amino-acid biosynthesis</keyword>
<keyword id="KW-0100">Branched-chain amino acid biosynthesis</keyword>
<keyword id="KW-0408">Iron</keyword>
<keyword id="KW-0411">Iron-sulfur</keyword>
<keyword id="KW-0432">Leucine biosynthesis</keyword>
<keyword id="KW-0456">Lyase</keyword>
<keyword id="KW-0479">Metal-binding</keyword>
<keyword id="KW-1185">Reference proteome</keyword>
<sequence length="880" mass="95683">MPKPTISYSLNGLPAAAVDSIGSLLEILARIRGIVLTEQSNDETASIIISAPDVHRLVVGSDDSHYDSTTLYIEDFLNRLCEALDAVGKKAEAGAFRHALQLYHTDRELGALKHGESVTNRQLKNDSFEDLEFLVEAWLVALNSEESARKLPAPLPVKSPDTRAMTLAEKILAHHAFSLPSSGGLKSGELGMKHGMVSIGELPSVWRNDRFWLAGDHTVEPRTYDQPRVRELLNGLNDAKQEFKMTENQGSNYTILHTEFVRERAEPGMLALGSDSHTCSAGAVSCLAIGLGAADVMTALATGETWIKVPESIRIDFTGEPAWYIRGKDVILYILKELKRNTFAADRIVEFGGLGARFLSCDARFAITNMCTELGGVTGIFVPDEVTNTFVSGRPQSKYKSNSIYFQPDKDASYAATFQIDLTMVESFIALHPSPDNVVPVSEKLDMSFEGCFIGACTTTEEELVLGALVLEAGLKNGLGLAPGKRMVVPGSIPIVNSLRELGLLEIYAQTGFEQPAVGCSLCLGMGADRAGEGENWISSQNRNFKNRMGKGSTGHICSAATVAASSFSMRLTNPAALLAQVSPDRYKALLESCQSYKNRVRKVKSSKKESVKRSVSVMPSYVEPYLHFRSPLTEKHTQMHAPSGGEGEQCGNLDIIESKIYALGDFVDTDAVSRDLFLHLSDVSGETMTSGVLTMLEIIPAAFILESPTDTLLGSHALEFTNPDFRDKVRQGMRVVVAGKAFGCGSSREEAPRALKGLGVQCVIAKSFSFIYGRNQPSIGLLGINIADDRFYELAKTGAGIKIDVPGRVVRLEGQNFPFVLDDMELSLIKNNGLATAYKKYGKNVFALLCNTKSSLRPSELAELQLKGVSDGMQTSLEW</sequence>
<accession>S3E7P8</accession>